<keyword id="KW-1015">Disulfide bond</keyword>
<keyword id="KW-0325">Glycoprotein</keyword>
<keyword id="KW-1185">Reference proteome</keyword>
<keyword id="KW-0964">Secreted</keyword>
<keyword id="KW-0732">Signal</keyword>
<evidence type="ECO:0000250" key="1">
    <source>
        <dbReference type="UniProtKB" id="P01233"/>
    </source>
</evidence>
<evidence type="ECO:0000256" key="2">
    <source>
        <dbReference type="SAM" id="MobiDB-lite"/>
    </source>
</evidence>
<evidence type="ECO:0000269" key="3">
    <source>
    </source>
</evidence>
<evidence type="ECO:0000269" key="4">
    <source>
    </source>
</evidence>
<evidence type="ECO:0000305" key="5"/>
<evidence type="ECO:0000312" key="6">
    <source>
        <dbReference type="HGNC" id="HGNC:16451"/>
    </source>
</evidence>
<name>CGB7_HUMAN</name>
<sequence>MEMFQGLLLLLLLSMGGTWASREMLRPRCRPINATLAVEKEGCPVCITVNTTICAGYCPTMTRVLQGVLPALPQVVCNYRDVRFESIRLPGCPRGVNPVVSYAVALSCQCALCRRSTTDCGGPKDHPLTCDDPRFQASSSSKAPPPSLPSPSRLPGPSDTPILPQ</sequence>
<organism>
    <name type="scientific">Homo sapiens</name>
    <name type="common">Human</name>
    <dbReference type="NCBI Taxonomy" id="9606"/>
    <lineage>
        <taxon>Eukaryota</taxon>
        <taxon>Metazoa</taxon>
        <taxon>Chordata</taxon>
        <taxon>Craniata</taxon>
        <taxon>Vertebrata</taxon>
        <taxon>Euteleostomi</taxon>
        <taxon>Mammalia</taxon>
        <taxon>Eutheria</taxon>
        <taxon>Euarchontoglires</taxon>
        <taxon>Primates</taxon>
        <taxon>Haplorrhini</taxon>
        <taxon>Catarrhini</taxon>
        <taxon>Hominidae</taxon>
        <taxon>Homo</taxon>
    </lineage>
</organism>
<feature type="signal peptide" evidence="1">
    <location>
        <begin position="1"/>
        <end position="20"/>
    </location>
</feature>
<feature type="chain" id="PRO_0000436152" description="Choriogonadotropin subunit beta 7">
    <location>
        <begin position="21"/>
        <end position="165"/>
    </location>
</feature>
<feature type="region of interest" description="Disordered" evidence="2">
    <location>
        <begin position="131"/>
        <end position="165"/>
    </location>
</feature>
<feature type="compositionally biased region" description="Pro residues" evidence="2">
    <location>
        <begin position="143"/>
        <end position="154"/>
    </location>
</feature>
<feature type="glycosylation site" description="N-linked (GlcNAc...) asparagine" evidence="1">
    <location>
        <position position="33"/>
    </location>
</feature>
<feature type="glycosylation site" description="N-linked (GlcNAc...) asparagine" evidence="1">
    <location>
        <position position="50"/>
    </location>
</feature>
<feature type="glycosylation site" description="O-linked (GalNAc...) serine" evidence="1">
    <location>
        <position position="141"/>
    </location>
</feature>
<feature type="glycosylation site" description="O-linked (GalNAc...) serine" evidence="1">
    <location>
        <position position="147"/>
    </location>
</feature>
<feature type="glycosylation site" description="O-linked (GalNAc...) serine" evidence="1">
    <location>
        <position position="152"/>
    </location>
</feature>
<feature type="glycosylation site" description="O-linked (GalNAc...) serine" evidence="1">
    <location>
        <position position="158"/>
    </location>
</feature>
<feature type="disulfide bond" evidence="1">
    <location>
        <begin position="29"/>
        <end position="77"/>
    </location>
</feature>
<feature type="disulfide bond" evidence="1">
    <location>
        <begin position="43"/>
        <end position="92"/>
    </location>
</feature>
<feature type="disulfide bond" evidence="1">
    <location>
        <begin position="46"/>
        <end position="130"/>
    </location>
</feature>
<feature type="disulfide bond" evidence="1">
    <location>
        <begin position="54"/>
        <end position="108"/>
    </location>
</feature>
<feature type="disulfide bond" evidence="1">
    <location>
        <begin position="58"/>
        <end position="110"/>
    </location>
</feature>
<feature type="disulfide bond" evidence="1">
    <location>
        <begin position="113"/>
        <end position="120"/>
    </location>
</feature>
<reference key="1">
    <citation type="journal article" date="2004" name="Nat. Genet.">
        <title>Complete sequencing and characterization of 21,243 full-length human cDNAs.</title>
        <authorList>
            <person name="Ota T."/>
            <person name="Suzuki Y."/>
            <person name="Nishikawa T."/>
            <person name="Otsuki T."/>
            <person name="Sugiyama T."/>
            <person name="Irie R."/>
            <person name="Wakamatsu A."/>
            <person name="Hayashi K."/>
            <person name="Sato H."/>
            <person name="Nagai K."/>
            <person name="Kimura K."/>
            <person name="Makita H."/>
            <person name="Sekine M."/>
            <person name="Obayashi M."/>
            <person name="Nishi T."/>
            <person name="Shibahara T."/>
            <person name="Tanaka T."/>
            <person name="Ishii S."/>
            <person name="Yamamoto J."/>
            <person name="Saito K."/>
            <person name="Kawai Y."/>
            <person name="Isono Y."/>
            <person name="Nakamura Y."/>
            <person name="Nagahari K."/>
            <person name="Murakami K."/>
            <person name="Yasuda T."/>
            <person name="Iwayanagi T."/>
            <person name="Wagatsuma M."/>
            <person name="Shiratori A."/>
            <person name="Sudo H."/>
            <person name="Hosoiri T."/>
            <person name="Kaku Y."/>
            <person name="Kodaira H."/>
            <person name="Kondo H."/>
            <person name="Sugawara M."/>
            <person name="Takahashi M."/>
            <person name="Kanda K."/>
            <person name="Yokoi T."/>
            <person name="Furuya T."/>
            <person name="Kikkawa E."/>
            <person name="Omura Y."/>
            <person name="Abe K."/>
            <person name="Kamihara K."/>
            <person name="Katsuta N."/>
            <person name="Sato K."/>
            <person name="Tanikawa M."/>
            <person name="Yamazaki M."/>
            <person name="Ninomiya K."/>
            <person name="Ishibashi T."/>
            <person name="Yamashita H."/>
            <person name="Murakawa K."/>
            <person name="Fujimori K."/>
            <person name="Tanai H."/>
            <person name="Kimata M."/>
            <person name="Watanabe M."/>
            <person name="Hiraoka S."/>
            <person name="Chiba Y."/>
            <person name="Ishida S."/>
            <person name="Ono Y."/>
            <person name="Takiguchi S."/>
            <person name="Watanabe S."/>
            <person name="Yosida M."/>
            <person name="Hotuta T."/>
            <person name="Kusano J."/>
            <person name="Kanehori K."/>
            <person name="Takahashi-Fujii A."/>
            <person name="Hara H."/>
            <person name="Tanase T.-O."/>
            <person name="Nomura Y."/>
            <person name="Togiya S."/>
            <person name="Komai F."/>
            <person name="Hara R."/>
            <person name="Takeuchi K."/>
            <person name="Arita M."/>
            <person name="Imose N."/>
            <person name="Musashino K."/>
            <person name="Yuuki H."/>
            <person name="Oshima A."/>
            <person name="Sasaki N."/>
            <person name="Aotsuka S."/>
            <person name="Yoshikawa Y."/>
            <person name="Matsunawa H."/>
            <person name="Ichihara T."/>
            <person name="Shiohata N."/>
            <person name="Sano S."/>
            <person name="Moriya S."/>
            <person name="Momiyama H."/>
            <person name="Satoh N."/>
            <person name="Takami S."/>
            <person name="Terashima Y."/>
            <person name="Suzuki O."/>
            <person name="Nakagawa S."/>
            <person name="Senoh A."/>
            <person name="Mizoguchi H."/>
            <person name="Goto Y."/>
            <person name="Shimizu F."/>
            <person name="Wakebe H."/>
            <person name="Hishigaki H."/>
            <person name="Watanabe T."/>
            <person name="Sugiyama A."/>
            <person name="Takemoto M."/>
            <person name="Kawakami B."/>
            <person name="Yamazaki M."/>
            <person name="Watanabe K."/>
            <person name="Kumagai A."/>
            <person name="Itakura S."/>
            <person name="Fukuzumi Y."/>
            <person name="Fujimori Y."/>
            <person name="Komiyama M."/>
            <person name="Tashiro H."/>
            <person name="Tanigami A."/>
            <person name="Fujiwara T."/>
            <person name="Ono T."/>
            <person name="Yamada K."/>
            <person name="Fujii Y."/>
            <person name="Ozaki K."/>
            <person name="Hirao M."/>
            <person name="Ohmori Y."/>
            <person name="Kawabata A."/>
            <person name="Hikiji T."/>
            <person name="Kobatake N."/>
            <person name="Inagaki H."/>
            <person name="Ikema Y."/>
            <person name="Okamoto S."/>
            <person name="Okitani R."/>
            <person name="Kawakami T."/>
            <person name="Noguchi S."/>
            <person name="Itoh T."/>
            <person name="Shigeta K."/>
            <person name="Senba T."/>
            <person name="Matsumura K."/>
            <person name="Nakajima Y."/>
            <person name="Mizuno T."/>
            <person name="Morinaga M."/>
            <person name="Sasaki M."/>
            <person name="Togashi T."/>
            <person name="Oyama M."/>
            <person name="Hata H."/>
            <person name="Watanabe M."/>
            <person name="Komatsu T."/>
            <person name="Mizushima-Sugano J."/>
            <person name="Satoh T."/>
            <person name="Shirai Y."/>
            <person name="Takahashi Y."/>
            <person name="Nakagawa K."/>
            <person name="Okumura K."/>
            <person name="Nagase T."/>
            <person name="Nomura N."/>
            <person name="Kikuchi H."/>
            <person name="Masuho Y."/>
            <person name="Yamashita R."/>
            <person name="Nakai K."/>
            <person name="Yada T."/>
            <person name="Nakamura Y."/>
            <person name="Ohara O."/>
            <person name="Isogai T."/>
            <person name="Sugano S."/>
        </authorList>
    </citation>
    <scope>NUCLEOTIDE SEQUENCE [LARGE SCALE MRNA]</scope>
</reference>
<reference key="2">
    <citation type="journal article" date="2004" name="Nature">
        <title>The DNA sequence and biology of human chromosome 19.</title>
        <authorList>
            <person name="Grimwood J."/>
            <person name="Gordon L.A."/>
            <person name="Olsen A.S."/>
            <person name="Terry A."/>
            <person name="Schmutz J."/>
            <person name="Lamerdin J.E."/>
            <person name="Hellsten U."/>
            <person name="Goodstein D."/>
            <person name="Couronne O."/>
            <person name="Tran-Gyamfi M."/>
            <person name="Aerts A."/>
            <person name="Altherr M."/>
            <person name="Ashworth L."/>
            <person name="Bajorek E."/>
            <person name="Black S."/>
            <person name="Branscomb E."/>
            <person name="Caenepeel S."/>
            <person name="Carrano A.V."/>
            <person name="Caoile C."/>
            <person name="Chan Y.M."/>
            <person name="Christensen M."/>
            <person name="Cleland C.A."/>
            <person name="Copeland A."/>
            <person name="Dalin E."/>
            <person name="Dehal P."/>
            <person name="Denys M."/>
            <person name="Detter J.C."/>
            <person name="Escobar J."/>
            <person name="Flowers D."/>
            <person name="Fotopulos D."/>
            <person name="Garcia C."/>
            <person name="Georgescu A.M."/>
            <person name="Glavina T."/>
            <person name="Gomez M."/>
            <person name="Gonzales E."/>
            <person name="Groza M."/>
            <person name="Hammon N."/>
            <person name="Hawkins T."/>
            <person name="Haydu L."/>
            <person name="Ho I."/>
            <person name="Huang W."/>
            <person name="Israni S."/>
            <person name="Jett J."/>
            <person name="Kadner K."/>
            <person name="Kimball H."/>
            <person name="Kobayashi A."/>
            <person name="Larionov V."/>
            <person name="Leem S.-H."/>
            <person name="Lopez F."/>
            <person name="Lou Y."/>
            <person name="Lowry S."/>
            <person name="Malfatti S."/>
            <person name="Martinez D."/>
            <person name="McCready P.M."/>
            <person name="Medina C."/>
            <person name="Morgan J."/>
            <person name="Nelson K."/>
            <person name="Nolan M."/>
            <person name="Ovcharenko I."/>
            <person name="Pitluck S."/>
            <person name="Pollard M."/>
            <person name="Popkie A.P."/>
            <person name="Predki P."/>
            <person name="Quan G."/>
            <person name="Ramirez L."/>
            <person name="Rash S."/>
            <person name="Retterer J."/>
            <person name="Rodriguez A."/>
            <person name="Rogers S."/>
            <person name="Salamov A."/>
            <person name="Salazar A."/>
            <person name="She X."/>
            <person name="Smith D."/>
            <person name="Slezak T."/>
            <person name="Solovyev V."/>
            <person name="Thayer N."/>
            <person name="Tice H."/>
            <person name="Tsai M."/>
            <person name="Ustaszewska A."/>
            <person name="Vo N."/>
            <person name="Wagner M."/>
            <person name="Wheeler J."/>
            <person name="Wu K."/>
            <person name="Xie G."/>
            <person name="Yang J."/>
            <person name="Dubchak I."/>
            <person name="Furey T.S."/>
            <person name="DeJong P."/>
            <person name="Dickson M."/>
            <person name="Gordon D."/>
            <person name="Eichler E.E."/>
            <person name="Pennacchio L.A."/>
            <person name="Richardson P."/>
            <person name="Stubbs L."/>
            <person name="Rokhsar D.S."/>
            <person name="Myers R.M."/>
            <person name="Rubin E.M."/>
            <person name="Lucas S.M."/>
        </authorList>
    </citation>
    <scope>NUCLEOTIDE SEQUENCE [LARGE SCALE GENOMIC DNA]</scope>
</reference>
<reference key="3">
    <citation type="submission" date="2005-07" db="EMBL/GenBank/DDBJ databases">
        <authorList>
            <person name="Mural R.J."/>
            <person name="Istrail S."/>
            <person name="Sutton G.G."/>
            <person name="Florea L."/>
            <person name="Halpern A.L."/>
            <person name="Mobarry C.M."/>
            <person name="Lippert R."/>
            <person name="Walenz B."/>
            <person name="Shatkay H."/>
            <person name="Dew I."/>
            <person name="Miller J.R."/>
            <person name="Flanigan M.J."/>
            <person name="Edwards N.J."/>
            <person name="Bolanos R."/>
            <person name="Fasulo D."/>
            <person name="Halldorsson B.V."/>
            <person name="Hannenhalli S."/>
            <person name="Turner R."/>
            <person name="Yooseph S."/>
            <person name="Lu F."/>
            <person name="Nusskern D.R."/>
            <person name="Shue B.C."/>
            <person name="Zheng X.H."/>
            <person name="Zhong F."/>
            <person name="Delcher A.L."/>
            <person name="Huson D.H."/>
            <person name="Kravitz S.A."/>
            <person name="Mouchard L."/>
            <person name="Reinert K."/>
            <person name="Remington K.A."/>
            <person name="Clark A.G."/>
            <person name="Waterman M.S."/>
            <person name="Eichler E.E."/>
            <person name="Adams M.D."/>
            <person name="Hunkapiller M.W."/>
            <person name="Myers E.W."/>
            <person name="Venter J.C."/>
        </authorList>
    </citation>
    <scope>NUCLEOTIDE SEQUENCE [LARGE SCALE GENOMIC DNA]</scope>
</reference>
<reference key="4">
    <citation type="journal article" date="2002" name="Mol. Biol. Evol.">
        <title>Chorionic gonadotropin has a recent origin within primates and an evolutionary history of selection.</title>
        <authorList>
            <person name="Maston G.A."/>
            <person name="Ruvolo M."/>
        </authorList>
    </citation>
    <scope>MISCELLANEOUS</scope>
</reference>
<reference key="5">
    <citation type="journal article" date="2005" name="Hum. Reprod.">
        <title>Expression of beta-subunit of HCG genes during normal and failed pregnancy.</title>
        <authorList>
            <person name="Rull K."/>
            <person name="Laan M."/>
        </authorList>
    </citation>
    <scope>TISSUE SPECIFICITY</scope>
    <scope>DEVELOPMENTAL STAGE</scope>
</reference>
<dbReference type="EMBL" id="AK125108">
    <property type="status" value="NOT_ANNOTATED_CDS"/>
    <property type="molecule type" value="mRNA"/>
</dbReference>
<dbReference type="EMBL" id="AC008687">
    <property type="status" value="NOT_ANNOTATED_CDS"/>
    <property type="molecule type" value="Genomic_DNA"/>
</dbReference>
<dbReference type="EMBL" id="CH471177">
    <property type="protein sequence ID" value="EAW52439.1"/>
    <property type="molecule type" value="Genomic_DNA"/>
</dbReference>
<dbReference type="CCDS" id="CCDS33071.1"/>
<dbReference type="RefSeq" id="NP_001372190.1">
    <property type="nucleotide sequence ID" value="NM_001385261.1"/>
</dbReference>
<dbReference type="RefSeq" id="NP_149133.1">
    <property type="nucleotide sequence ID" value="NM_033142.2"/>
</dbReference>
<dbReference type="RefSeq" id="XP_016882991.1">
    <property type="nucleotide sequence ID" value="XM_017027502.1"/>
</dbReference>
<dbReference type="SMR" id="P0DN87"/>
<dbReference type="FunCoup" id="P0DN87">
    <property type="interactions" value="202"/>
</dbReference>
<dbReference type="STRING" id="9606.ENSP00000470813"/>
<dbReference type="GlyCosmos" id="P0DN87">
    <property type="glycosylation" value="6 sites, No reported glycans"/>
</dbReference>
<dbReference type="GlyGen" id="P0DN87">
    <property type="glycosylation" value="6 sites"/>
</dbReference>
<dbReference type="BioMuta" id="CGB7"/>
<dbReference type="jPOST" id="P0DN87"/>
<dbReference type="MassIVE" id="P0DN87"/>
<dbReference type="PaxDb" id="9606-ENSP00000470813"/>
<dbReference type="PeptideAtlas" id="P0DN87"/>
<dbReference type="Antibodypedia" id="31888">
    <property type="antibodies" value="53 antibodies from 14 providers"/>
</dbReference>
<dbReference type="DNASU" id="94027"/>
<dbReference type="Ensembl" id="ENST00000596965.5">
    <property type="protein sequence ID" value="ENSP00000469076.1"/>
    <property type="gene ID" value="ENSG00000196337.14"/>
</dbReference>
<dbReference type="Ensembl" id="ENST00000597853.5">
    <property type="protein sequence ID" value="ENSP00000470813.1"/>
    <property type="gene ID" value="ENSG00000196337.14"/>
</dbReference>
<dbReference type="Ensembl" id="ENST00000684222.1">
    <property type="protein sequence ID" value="ENSP00000507822.1"/>
    <property type="gene ID" value="ENSG00000196337.14"/>
</dbReference>
<dbReference type="GeneID" id="94027"/>
<dbReference type="KEGG" id="hsa:94027"/>
<dbReference type="MANE-Select" id="ENST00000684222.1">
    <property type="protein sequence ID" value="ENSP00000507822.1"/>
    <property type="RefSeq nucleotide sequence ID" value="NM_001385261.1"/>
    <property type="RefSeq protein sequence ID" value="NP_001372190.1"/>
</dbReference>
<dbReference type="AGR" id="HGNC:16451"/>
<dbReference type="CTD" id="94027"/>
<dbReference type="DisGeNET" id="94027"/>
<dbReference type="GeneCards" id="CGB7"/>
<dbReference type="HGNC" id="HGNC:16451">
    <property type="gene designation" value="CGB7"/>
</dbReference>
<dbReference type="HPA" id="ENSG00000196337">
    <property type="expression patterns" value="Tissue enhanced (prostate, skin)"/>
</dbReference>
<dbReference type="MIM" id="608826">
    <property type="type" value="gene"/>
</dbReference>
<dbReference type="neXtProt" id="NX_P0DN87"/>
<dbReference type="OpenTargets" id="ENSG00000196337"/>
<dbReference type="VEuPathDB" id="HostDB:ENSG00000196337"/>
<dbReference type="eggNOG" id="ENOG502S49V">
    <property type="taxonomic scope" value="Eukaryota"/>
</dbReference>
<dbReference type="GeneTree" id="ENSGT00940000163162"/>
<dbReference type="InParanoid" id="P0DN87"/>
<dbReference type="OMA" id="CDDPFQD"/>
<dbReference type="OrthoDB" id="9525526at2759"/>
<dbReference type="PAN-GO" id="P0DN87">
    <property type="GO annotations" value="3 GO annotations based on evolutionary models"/>
</dbReference>
<dbReference type="PhylomeDB" id="P0DN87"/>
<dbReference type="PathwayCommons" id="P0DN87"/>
<dbReference type="BioGRID-ORCS" id="94027">
    <property type="hits" value="12 hits in 673 CRISPR screens"/>
</dbReference>
<dbReference type="ChiTaRS" id="CGB7">
    <property type="organism name" value="human"/>
</dbReference>
<dbReference type="GenomeRNAi" id="94027"/>
<dbReference type="Pharos" id="P0DN87">
    <property type="development level" value="Tdark"/>
</dbReference>
<dbReference type="PRO" id="PR:P0DN87"/>
<dbReference type="Proteomes" id="UP000005640">
    <property type="component" value="Chromosome 19"/>
</dbReference>
<dbReference type="RNAct" id="P0DN87">
    <property type="molecule type" value="protein"/>
</dbReference>
<dbReference type="Bgee" id="ENSG00000196337">
    <property type="expression patterns" value="Expressed in lower esophagus mucosa and 62 other cell types or tissues"/>
</dbReference>
<dbReference type="ExpressionAtlas" id="P0DN87">
    <property type="expression patterns" value="baseline and differential"/>
</dbReference>
<dbReference type="GO" id="GO:0005737">
    <property type="term" value="C:cytoplasm"/>
    <property type="evidence" value="ECO:0000318"/>
    <property type="project" value="GO_Central"/>
</dbReference>
<dbReference type="GO" id="GO:0005615">
    <property type="term" value="C:extracellular space"/>
    <property type="evidence" value="ECO:0000318"/>
    <property type="project" value="GO_Central"/>
</dbReference>
<dbReference type="GO" id="GO:0005179">
    <property type="term" value="F:hormone activity"/>
    <property type="evidence" value="ECO:0000304"/>
    <property type="project" value="ProtInc"/>
</dbReference>
<dbReference type="GO" id="GO:0006915">
    <property type="term" value="P:apoptotic process"/>
    <property type="evidence" value="ECO:0000304"/>
    <property type="project" value="ProtInc"/>
</dbReference>
<dbReference type="GO" id="GO:0007267">
    <property type="term" value="P:cell-cell signaling"/>
    <property type="evidence" value="ECO:0000304"/>
    <property type="project" value="ProtInc"/>
</dbReference>
<dbReference type="GO" id="GO:0007292">
    <property type="term" value="P:female gamete generation"/>
    <property type="evidence" value="ECO:0000304"/>
    <property type="project" value="ProtInc"/>
</dbReference>
<dbReference type="GO" id="GO:0007186">
    <property type="term" value="P:G protein-coupled receptor signaling pathway"/>
    <property type="evidence" value="ECO:0000318"/>
    <property type="project" value="GO_Central"/>
</dbReference>
<dbReference type="GO" id="GO:0007165">
    <property type="term" value="P:signal transduction"/>
    <property type="evidence" value="ECO:0000304"/>
    <property type="project" value="ProtInc"/>
</dbReference>
<dbReference type="CDD" id="cd00069">
    <property type="entry name" value="GHB_like"/>
    <property type="match status" value="1"/>
</dbReference>
<dbReference type="FunFam" id="2.10.90.10:FF:000007">
    <property type="entry name" value="Luteinizing hormone beta subunit"/>
    <property type="match status" value="1"/>
</dbReference>
<dbReference type="Gene3D" id="2.10.90.10">
    <property type="entry name" value="Cystine-knot cytokines"/>
    <property type="match status" value="1"/>
</dbReference>
<dbReference type="InterPro" id="IPR029034">
    <property type="entry name" value="Cystine-knot_cytokine"/>
</dbReference>
<dbReference type="InterPro" id="IPR006208">
    <property type="entry name" value="Glyco_hormone_CN"/>
</dbReference>
<dbReference type="InterPro" id="IPR001545">
    <property type="entry name" value="Gonadotropin_bsu"/>
</dbReference>
<dbReference type="InterPro" id="IPR018245">
    <property type="entry name" value="Gonadotropin_bsu_CS"/>
</dbReference>
<dbReference type="PANTHER" id="PTHR11515:SF25">
    <property type="entry name" value="CHORIOGONADOTROPIN SUBUNIT BETA 3-RELATED"/>
    <property type="match status" value="1"/>
</dbReference>
<dbReference type="PANTHER" id="PTHR11515">
    <property type="entry name" value="GLYCOPROTEIN HORMONE BETA CHAIN"/>
    <property type="match status" value="1"/>
</dbReference>
<dbReference type="Pfam" id="PF00007">
    <property type="entry name" value="Cys_knot"/>
    <property type="match status" value="1"/>
</dbReference>
<dbReference type="SMART" id="SM00068">
    <property type="entry name" value="GHB"/>
    <property type="match status" value="1"/>
</dbReference>
<dbReference type="SUPFAM" id="SSF57501">
    <property type="entry name" value="Cystine-knot cytokines"/>
    <property type="match status" value="1"/>
</dbReference>
<dbReference type="PROSITE" id="PS00261">
    <property type="entry name" value="GLYCO_HORMONE_BETA_1"/>
    <property type="match status" value="1"/>
</dbReference>
<dbReference type="PROSITE" id="PS00689">
    <property type="entry name" value="GLYCO_HORMONE_BETA_2"/>
    <property type="match status" value="1"/>
</dbReference>
<proteinExistence type="evidence at transcript level"/>
<comment type="function">
    <text evidence="5">Beta subunit of the human chorionic gonadotropin (hCG). hCG is a complex glycoprotein composed of two glycosylated subunits alpha and beta which are non-covalently associated. The alpha subunit is identical to those in the pituitary gonadotropin hormones (LH, FSH and TSH). The beta subunits are distinct in each of the hormones and confer receptor and biological specificity. Has an essential role for pregnancy and maternal adaptation. Stimulates the ovaries to synthesize the steroids that are essential for the maintenance of pregnancy.</text>
</comment>
<comment type="subunit">
    <text evidence="5">Heterodimer of a common alpha chain identical in LH, FSH, TSH and HCG and a unique beta chain distinct in each of the hormones and confers receptor and biological specificity.</text>
</comment>
<comment type="subcellular location">
    <subcellularLocation>
        <location evidence="4">Secreted</location>
    </subcellularLocation>
</comment>
<comment type="tissue specificity">
    <text evidence="4">High expression in the placenta throughout pregnancy.</text>
</comment>
<comment type="developmental stage">
    <text evidence="4">Expressed in the placenta throughout pregnancy.</text>
</comment>
<comment type="miscellaneous">
    <text evidence="3">Encoded by a cluster of genes that have evolved by duplication from LHB. HCG-beta is encoded by six non-allelic genes (CGB) clustered on chromosome 19q13.3 and named CGB1, CGB2, CGB3, CGB5, CGB7 and CGB8. Two specific hCGb proteins that differ by three amino acids in positions 2,4 and 117 have been described: type 1 (CGB7) and type 2 (CGB3, CGB5, CGB8). The CGB gene first arose in the common ancestor of the anthropoid primates.</text>
</comment>
<comment type="similarity">
    <text evidence="5">Belongs to the glycoprotein hormones subunit beta family.</text>
</comment>
<gene>
    <name evidence="6" type="primary">CGB7</name>
</gene>
<protein>
    <recommendedName>
        <fullName>Choriogonadotropin subunit beta 7</fullName>
    </recommendedName>
</protein>
<accession>P0DN87</accession>
<accession>A1A5E0</accession>
<accession>B9ZVP5</accession>
<accession>P01233</accession>
<accession>Q13991</accession>
<accession>Q14000</accession>
<accession>Q3KPI3</accession>
<accession>Q3SY41</accession>
<accession>Q8WTT5</accession>
<accession>Q8WXL1</accession>
<accession>Q8WXL2</accession>
<accession>Q8WXL3</accession>
<accession>Q8WXL4</accession>